<name>ATPL_STAES</name>
<proteinExistence type="inferred from homology"/>
<organism>
    <name type="scientific">Staphylococcus epidermidis (strain ATCC 12228 / FDA PCI 1200)</name>
    <dbReference type="NCBI Taxonomy" id="176280"/>
    <lineage>
        <taxon>Bacteria</taxon>
        <taxon>Bacillati</taxon>
        <taxon>Bacillota</taxon>
        <taxon>Bacilli</taxon>
        <taxon>Bacillales</taxon>
        <taxon>Staphylococcaceae</taxon>
        <taxon>Staphylococcus</taxon>
    </lineage>
</organism>
<dbReference type="EMBL" id="AE015929">
    <property type="protein sequence ID" value="AAO05304.1"/>
    <property type="molecule type" value="Genomic_DNA"/>
</dbReference>
<dbReference type="RefSeq" id="NP_765260.1">
    <property type="nucleotide sequence ID" value="NC_004461.1"/>
</dbReference>
<dbReference type="RefSeq" id="WP_001048816.1">
    <property type="nucleotide sequence ID" value="NZ_WBME01000021.1"/>
</dbReference>
<dbReference type="SMR" id="Q8CNJ2"/>
<dbReference type="GeneID" id="98346415"/>
<dbReference type="KEGG" id="sep:SE_1705"/>
<dbReference type="PATRIC" id="fig|176280.10.peg.1666"/>
<dbReference type="eggNOG" id="COG0636">
    <property type="taxonomic scope" value="Bacteria"/>
</dbReference>
<dbReference type="HOGENOM" id="CLU_148047_1_1_9"/>
<dbReference type="OrthoDB" id="2357540at2"/>
<dbReference type="PRO" id="PR:Q8CNJ2"/>
<dbReference type="Proteomes" id="UP000001411">
    <property type="component" value="Chromosome"/>
</dbReference>
<dbReference type="GO" id="GO:0005886">
    <property type="term" value="C:plasma membrane"/>
    <property type="evidence" value="ECO:0007669"/>
    <property type="project" value="UniProtKB-SubCell"/>
</dbReference>
<dbReference type="GO" id="GO:0045259">
    <property type="term" value="C:proton-transporting ATP synthase complex"/>
    <property type="evidence" value="ECO:0007669"/>
    <property type="project" value="UniProtKB-KW"/>
</dbReference>
<dbReference type="GO" id="GO:0033177">
    <property type="term" value="C:proton-transporting two-sector ATPase complex, proton-transporting domain"/>
    <property type="evidence" value="ECO:0007669"/>
    <property type="project" value="InterPro"/>
</dbReference>
<dbReference type="GO" id="GO:0008289">
    <property type="term" value="F:lipid binding"/>
    <property type="evidence" value="ECO:0007669"/>
    <property type="project" value="UniProtKB-KW"/>
</dbReference>
<dbReference type="GO" id="GO:0046933">
    <property type="term" value="F:proton-transporting ATP synthase activity, rotational mechanism"/>
    <property type="evidence" value="ECO:0007669"/>
    <property type="project" value="UniProtKB-UniRule"/>
</dbReference>
<dbReference type="CDD" id="cd18185">
    <property type="entry name" value="ATP-synt_Fo_c_ATPE"/>
    <property type="match status" value="1"/>
</dbReference>
<dbReference type="FunFam" id="1.20.20.10:FF:000004">
    <property type="entry name" value="ATP synthase subunit c"/>
    <property type="match status" value="1"/>
</dbReference>
<dbReference type="Gene3D" id="1.20.20.10">
    <property type="entry name" value="F1F0 ATP synthase subunit C"/>
    <property type="match status" value="1"/>
</dbReference>
<dbReference type="HAMAP" id="MF_01396">
    <property type="entry name" value="ATP_synth_c_bact"/>
    <property type="match status" value="1"/>
</dbReference>
<dbReference type="InterPro" id="IPR005953">
    <property type="entry name" value="ATP_synth_csu_bac/chlpt"/>
</dbReference>
<dbReference type="InterPro" id="IPR000454">
    <property type="entry name" value="ATP_synth_F0_csu"/>
</dbReference>
<dbReference type="InterPro" id="IPR020537">
    <property type="entry name" value="ATP_synth_F0_csu_DDCD_BS"/>
</dbReference>
<dbReference type="InterPro" id="IPR038662">
    <property type="entry name" value="ATP_synth_F0_csu_sf"/>
</dbReference>
<dbReference type="InterPro" id="IPR002379">
    <property type="entry name" value="ATPase_proteolipid_c-like_dom"/>
</dbReference>
<dbReference type="InterPro" id="IPR035921">
    <property type="entry name" value="F/V-ATP_Csub_sf"/>
</dbReference>
<dbReference type="NCBIfam" id="TIGR01260">
    <property type="entry name" value="ATP_synt_c"/>
    <property type="match status" value="1"/>
</dbReference>
<dbReference type="NCBIfam" id="NF005363">
    <property type="entry name" value="PRK06876.1"/>
    <property type="match status" value="1"/>
</dbReference>
<dbReference type="Pfam" id="PF00137">
    <property type="entry name" value="ATP-synt_C"/>
    <property type="match status" value="1"/>
</dbReference>
<dbReference type="PRINTS" id="PR00124">
    <property type="entry name" value="ATPASEC"/>
</dbReference>
<dbReference type="SUPFAM" id="SSF81333">
    <property type="entry name" value="F1F0 ATP synthase subunit C"/>
    <property type="match status" value="1"/>
</dbReference>
<dbReference type="PROSITE" id="PS00605">
    <property type="entry name" value="ATPASE_C"/>
    <property type="match status" value="1"/>
</dbReference>
<feature type="chain" id="PRO_1000184509" description="ATP synthase subunit c">
    <location>
        <begin position="1"/>
        <end position="70"/>
    </location>
</feature>
<feature type="transmembrane region" description="Helical" evidence="1">
    <location>
        <begin position="4"/>
        <end position="24"/>
    </location>
</feature>
<feature type="transmembrane region" description="Helical" evidence="1">
    <location>
        <begin position="45"/>
        <end position="65"/>
    </location>
</feature>
<feature type="site" description="Reversibly protonated during proton transport" evidence="1">
    <location>
        <position position="54"/>
    </location>
</feature>
<evidence type="ECO:0000255" key="1">
    <source>
        <dbReference type="HAMAP-Rule" id="MF_01396"/>
    </source>
</evidence>
<comment type="function">
    <text evidence="1">F(1)F(0) ATP synthase produces ATP from ADP in the presence of a proton or sodium gradient. F-type ATPases consist of two structural domains, F(1) containing the extramembraneous catalytic core and F(0) containing the membrane proton channel, linked together by a central stalk and a peripheral stalk. During catalysis, ATP synthesis in the catalytic domain of F(1) is coupled via a rotary mechanism of the central stalk subunits to proton translocation.</text>
</comment>
<comment type="function">
    <text evidence="1">Key component of the F(0) channel; it plays a direct role in translocation across the membrane. A homomeric c-ring of between 10-14 subunits forms the central stalk rotor element with the F(1) delta and epsilon subunits.</text>
</comment>
<comment type="subunit">
    <text evidence="1">F-type ATPases have 2 components, F(1) - the catalytic core - and F(0) - the membrane proton channel. F(1) has five subunits: alpha(3), beta(3), gamma(1), delta(1), epsilon(1). F(0) has three main subunits: a(1), b(2) and c(10-14). The alpha and beta chains form an alternating ring which encloses part of the gamma chain. F(1) is attached to F(0) by a central stalk formed by the gamma and epsilon chains, while a peripheral stalk is formed by the delta and b chains.</text>
</comment>
<comment type="subcellular location">
    <subcellularLocation>
        <location evidence="1">Cell membrane</location>
        <topology evidence="1">Multi-pass membrane protein</topology>
    </subcellularLocation>
</comment>
<comment type="similarity">
    <text evidence="1">Belongs to the ATPase C chain family.</text>
</comment>
<gene>
    <name evidence="1" type="primary">atpE</name>
    <name type="ordered locus">SE_1705</name>
</gene>
<accession>Q8CNJ2</accession>
<keyword id="KW-0066">ATP synthesis</keyword>
<keyword id="KW-1003">Cell membrane</keyword>
<keyword id="KW-0138">CF(0)</keyword>
<keyword id="KW-0375">Hydrogen ion transport</keyword>
<keyword id="KW-0406">Ion transport</keyword>
<keyword id="KW-0446">Lipid-binding</keyword>
<keyword id="KW-0472">Membrane</keyword>
<keyword id="KW-0812">Transmembrane</keyword>
<keyword id="KW-1133">Transmembrane helix</keyword>
<keyword id="KW-0813">Transport</keyword>
<sequence>MNLIAAAIAIGLSALGAGIGNGLIVSRTVEGVARQPEARGQLMGIMFIGVGLVEALPIIGVVIAFMTFAG</sequence>
<reference key="1">
    <citation type="journal article" date="2003" name="Mol. Microbiol.">
        <title>Genome-based analysis of virulence genes in a non-biofilm-forming Staphylococcus epidermidis strain (ATCC 12228).</title>
        <authorList>
            <person name="Zhang Y.-Q."/>
            <person name="Ren S.-X."/>
            <person name="Li H.-L."/>
            <person name="Wang Y.-X."/>
            <person name="Fu G."/>
            <person name="Yang J."/>
            <person name="Qin Z.-Q."/>
            <person name="Miao Y.-G."/>
            <person name="Wang W.-Y."/>
            <person name="Chen R.-S."/>
            <person name="Shen Y."/>
            <person name="Chen Z."/>
            <person name="Yuan Z.-H."/>
            <person name="Zhao G.-P."/>
            <person name="Qu D."/>
            <person name="Danchin A."/>
            <person name="Wen Y.-M."/>
        </authorList>
    </citation>
    <scope>NUCLEOTIDE SEQUENCE [LARGE SCALE GENOMIC DNA]</scope>
    <source>
        <strain>ATCC 12228 / FDA PCI 1200</strain>
    </source>
</reference>
<protein>
    <recommendedName>
        <fullName evidence="1">ATP synthase subunit c</fullName>
    </recommendedName>
    <alternativeName>
        <fullName evidence="1">ATP synthase F(0) sector subunit c</fullName>
    </alternativeName>
    <alternativeName>
        <fullName evidence="1">F-type ATPase subunit c</fullName>
        <shortName evidence="1">F-ATPase subunit c</shortName>
    </alternativeName>
    <alternativeName>
        <fullName evidence="1">Lipid-binding protein</fullName>
    </alternativeName>
</protein>